<comment type="function">
    <text evidence="1">NDH-1 shuttles electrons from NADH, via FMN and iron-sulfur (Fe-S) centers, to quinones in the respiratory chain. The immediate electron acceptor for the enzyme in this species is believed to be ubiquinone. Couples the redox reaction to proton translocation (for every two electrons transferred, four hydrogen ions are translocated across the cytoplasmic membrane), and thus conserves the redox energy in a proton gradient.</text>
</comment>
<comment type="catalytic activity">
    <reaction evidence="1">
        <text>a quinone + NADH + 5 H(+)(in) = a quinol + NAD(+) + 4 H(+)(out)</text>
        <dbReference type="Rhea" id="RHEA:57888"/>
        <dbReference type="ChEBI" id="CHEBI:15378"/>
        <dbReference type="ChEBI" id="CHEBI:24646"/>
        <dbReference type="ChEBI" id="CHEBI:57540"/>
        <dbReference type="ChEBI" id="CHEBI:57945"/>
        <dbReference type="ChEBI" id="CHEBI:132124"/>
    </reaction>
</comment>
<comment type="cofactor">
    <cofactor evidence="1">
        <name>[4Fe-4S] cluster</name>
        <dbReference type="ChEBI" id="CHEBI:49883"/>
    </cofactor>
    <text evidence="1">Binds 1 [4Fe-4S] cluster.</text>
</comment>
<comment type="subunit">
    <text evidence="1">NDH-1 is composed of 14 different subunits. Subunits NuoB, C, D, E, F, and G constitute the peripheral sector of the complex.</text>
</comment>
<comment type="subcellular location">
    <subcellularLocation>
        <location evidence="1">Cell inner membrane</location>
        <topology evidence="1">Peripheral membrane protein</topology>
        <orientation evidence="1">Cytoplasmic side</orientation>
    </subcellularLocation>
</comment>
<comment type="similarity">
    <text evidence="1">Belongs to the complex I 20 kDa subunit family.</text>
</comment>
<evidence type="ECO:0000255" key="1">
    <source>
        <dbReference type="HAMAP-Rule" id="MF_01356"/>
    </source>
</evidence>
<keyword id="KW-0004">4Fe-4S</keyword>
<keyword id="KW-0997">Cell inner membrane</keyword>
<keyword id="KW-1003">Cell membrane</keyword>
<keyword id="KW-0408">Iron</keyword>
<keyword id="KW-0411">Iron-sulfur</keyword>
<keyword id="KW-0472">Membrane</keyword>
<keyword id="KW-0479">Metal-binding</keyword>
<keyword id="KW-0520">NAD</keyword>
<keyword id="KW-0874">Quinone</keyword>
<keyword id="KW-1278">Translocase</keyword>
<keyword id="KW-0813">Transport</keyword>
<keyword id="KW-0830">Ubiquinone</keyword>
<dbReference type="EC" id="7.1.1.-" evidence="1"/>
<dbReference type="EMBL" id="CP001001">
    <property type="protein sequence ID" value="ACB24054.1"/>
    <property type="molecule type" value="Genomic_DNA"/>
</dbReference>
<dbReference type="RefSeq" id="WP_010686017.1">
    <property type="nucleotide sequence ID" value="NC_010505.1"/>
</dbReference>
<dbReference type="SMR" id="B1LUN6"/>
<dbReference type="STRING" id="426355.Mrad2831_2059"/>
<dbReference type="GeneID" id="6138088"/>
<dbReference type="KEGG" id="mrd:Mrad2831_2059"/>
<dbReference type="eggNOG" id="COG0377">
    <property type="taxonomic scope" value="Bacteria"/>
</dbReference>
<dbReference type="HOGENOM" id="CLU_055737_7_3_5"/>
<dbReference type="OrthoDB" id="9786737at2"/>
<dbReference type="Proteomes" id="UP000006589">
    <property type="component" value="Chromosome"/>
</dbReference>
<dbReference type="GO" id="GO:0005886">
    <property type="term" value="C:plasma membrane"/>
    <property type="evidence" value="ECO:0007669"/>
    <property type="project" value="UniProtKB-SubCell"/>
</dbReference>
<dbReference type="GO" id="GO:0045271">
    <property type="term" value="C:respiratory chain complex I"/>
    <property type="evidence" value="ECO:0007669"/>
    <property type="project" value="TreeGrafter"/>
</dbReference>
<dbReference type="GO" id="GO:0051539">
    <property type="term" value="F:4 iron, 4 sulfur cluster binding"/>
    <property type="evidence" value="ECO:0007669"/>
    <property type="project" value="UniProtKB-KW"/>
</dbReference>
<dbReference type="GO" id="GO:0005506">
    <property type="term" value="F:iron ion binding"/>
    <property type="evidence" value="ECO:0007669"/>
    <property type="project" value="UniProtKB-UniRule"/>
</dbReference>
<dbReference type="GO" id="GO:0008137">
    <property type="term" value="F:NADH dehydrogenase (ubiquinone) activity"/>
    <property type="evidence" value="ECO:0007669"/>
    <property type="project" value="InterPro"/>
</dbReference>
<dbReference type="GO" id="GO:0050136">
    <property type="term" value="F:NADH:ubiquinone reductase (non-electrogenic) activity"/>
    <property type="evidence" value="ECO:0007669"/>
    <property type="project" value="UniProtKB-UniRule"/>
</dbReference>
<dbReference type="GO" id="GO:0048038">
    <property type="term" value="F:quinone binding"/>
    <property type="evidence" value="ECO:0007669"/>
    <property type="project" value="UniProtKB-KW"/>
</dbReference>
<dbReference type="GO" id="GO:0009060">
    <property type="term" value="P:aerobic respiration"/>
    <property type="evidence" value="ECO:0007669"/>
    <property type="project" value="TreeGrafter"/>
</dbReference>
<dbReference type="GO" id="GO:0015990">
    <property type="term" value="P:electron transport coupled proton transport"/>
    <property type="evidence" value="ECO:0007669"/>
    <property type="project" value="TreeGrafter"/>
</dbReference>
<dbReference type="FunFam" id="3.40.50.12280:FF:000001">
    <property type="entry name" value="NADH-quinone oxidoreductase subunit B 2"/>
    <property type="match status" value="1"/>
</dbReference>
<dbReference type="Gene3D" id="3.40.50.12280">
    <property type="match status" value="1"/>
</dbReference>
<dbReference type="HAMAP" id="MF_01356">
    <property type="entry name" value="NDH1_NuoB"/>
    <property type="match status" value="1"/>
</dbReference>
<dbReference type="InterPro" id="IPR006137">
    <property type="entry name" value="NADH_UbQ_OxRdtase-like_20kDa"/>
</dbReference>
<dbReference type="InterPro" id="IPR006138">
    <property type="entry name" value="NADH_UQ_OxRdtase_20Kd_su"/>
</dbReference>
<dbReference type="NCBIfam" id="TIGR01957">
    <property type="entry name" value="nuoB_fam"/>
    <property type="match status" value="1"/>
</dbReference>
<dbReference type="NCBIfam" id="NF005012">
    <property type="entry name" value="PRK06411.1"/>
    <property type="match status" value="1"/>
</dbReference>
<dbReference type="PANTHER" id="PTHR11995">
    <property type="entry name" value="NADH DEHYDROGENASE"/>
    <property type="match status" value="1"/>
</dbReference>
<dbReference type="PANTHER" id="PTHR11995:SF14">
    <property type="entry name" value="NADH DEHYDROGENASE [UBIQUINONE] IRON-SULFUR PROTEIN 7, MITOCHONDRIAL"/>
    <property type="match status" value="1"/>
</dbReference>
<dbReference type="Pfam" id="PF01058">
    <property type="entry name" value="Oxidored_q6"/>
    <property type="match status" value="1"/>
</dbReference>
<dbReference type="SUPFAM" id="SSF56770">
    <property type="entry name" value="HydA/Nqo6-like"/>
    <property type="match status" value="1"/>
</dbReference>
<dbReference type="PROSITE" id="PS01150">
    <property type="entry name" value="COMPLEX1_20K"/>
    <property type="match status" value="1"/>
</dbReference>
<accession>B1LUN6</accession>
<organism>
    <name type="scientific">Methylobacterium radiotolerans (strain ATCC 27329 / DSM 1819 / JCM 2831 / NBRC 15690 / NCIMB 10815 / 0-1)</name>
    <dbReference type="NCBI Taxonomy" id="426355"/>
    <lineage>
        <taxon>Bacteria</taxon>
        <taxon>Pseudomonadati</taxon>
        <taxon>Pseudomonadota</taxon>
        <taxon>Alphaproteobacteria</taxon>
        <taxon>Hyphomicrobiales</taxon>
        <taxon>Methylobacteriaceae</taxon>
        <taxon>Methylobacterium</taxon>
    </lineage>
</organism>
<gene>
    <name evidence="1" type="primary">nuoB</name>
    <name type="ordered locus">Mrad2831_2059</name>
</gene>
<sequence>MALITDTNRAPAIAPQPKGIIDPNTGRPIGADDPTFLSISDELADRGFLLTTTDELINWARTGSLMWMTFGLACCAVEMMQMSMPRYDCERFGFAPRGSPRQSDVMIVAGTLTNKMAPALRKVYDQMPEPRYVISMGSCANGGGYYHYSYSVVRGCDRVVPVDIYVPGCPPTAEALLYGVLLLQKKIRRTGTIER</sequence>
<proteinExistence type="inferred from homology"/>
<feature type="chain" id="PRO_0000376270" description="NADH-quinone oxidoreductase subunit B">
    <location>
        <begin position="1"/>
        <end position="195"/>
    </location>
</feature>
<feature type="binding site" evidence="1">
    <location>
        <position position="74"/>
    </location>
    <ligand>
        <name>[4Fe-4S] cluster</name>
        <dbReference type="ChEBI" id="CHEBI:49883"/>
    </ligand>
</feature>
<feature type="binding site" evidence="1">
    <location>
        <position position="75"/>
    </location>
    <ligand>
        <name>[4Fe-4S] cluster</name>
        <dbReference type="ChEBI" id="CHEBI:49883"/>
    </ligand>
</feature>
<feature type="binding site" evidence="1">
    <location>
        <position position="139"/>
    </location>
    <ligand>
        <name>[4Fe-4S] cluster</name>
        <dbReference type="ChEBI" id="CHEBI:49883"/>
    </ligand>
</feature>
<feature type="binding site" evidence="1">
    <location>
        <position position="169"/>
    </location>
    <ligand>
        <name>[4Fe-4S] cluster</name>
        <dbReference type="ChEBI" id="CHEBI:49883"/>
    </ligand>
</feature>
<protein>
    <recommendedName>
        <fullName evidence="1">NADH-quinone oxidoreductase subunit B</fullName>
        <ecNumber evidence="1">7.1.1.-</ecNumber>
    </recommendedName>
    <alternativeName>
        <fullName evidence="1">NADH dehydrogenase I subunit B</fullName>
    </alternativeName>
    <alternativeName>
        <fullName evidence="1">NDH-1 subunit B</fullName>
    </alternativeName>
</protein>
<reference key="1">
    <citation type="submission" date="2008-03" db="EMBL/GenBank/DDBJ databases">
        <title>Complete sequence of chromosome of Methylobacterium radiotolerans JCM 2831.</title>
        <authorList>
            <consortium name="US DOE Joint Genome Institute"/>
            <person name="Copeland A."/>
            <person name="Lucas S."/>
            <person name="Lapidus A."/>
            <person name="Glavina del Rio T."/>
            <person name="Dalin E."/>
            <person name="Tice H."/>
            <person name="Bruce D."/>
            <person name="Goodwin L."/>
            <person name="Pitluck S."/>
            <person name="Kiss H."/>
            <person name="Brettin T."/>
            <person name="Detter J.C."/>
            <person name="Han C."/>
            <person name="Kuske C.R."/>
            <person name="Schmutz J."/>
            <person name="Larimer F."/>
            <person name="Land M."/>
            <person name="Hauser L."/>
            <person name="Kyrpides N."/>
            <person name="Mikhailova N."/>
            <person name="Marx C.J."/>
            <person name="Richardson P."/>
        </authorList>
    </citation>
    <scope>NUCLEOTIDE SEQUENCE [LARGE SCALE GENOMIC DNA]</scope>
    <source>
        <strain>ATCC 27329 / DSM 1819 / JCM 2831 / NBRC 15690 / NCIMB 10815 / 0-1</strain>
    </source>
</reference>
<name>NUOB_METRJ</name>